<reference key="1">
    <citation type="journal article" date="2006" name="Proc. Natl. Acad. Sci. U.S.A.">
        <title>Identification of genes subject to positive selection in uropathogenic strains of Escherichia coli: a comparative genomics approach.</title>
        <authorList>
            <person name="Chen S.L."/>
            <person name="Hung C.-S."/>
            <person name="Xu J."/>
            <person name="Reigstad C.S."/>
            <person name="Magrini V."/>
            <person name="Sabo A."/>
            <person name="Blasiar D."/>
            <person name="Bieri T."/>
            <person name="Meyer R.R."/>
            <person name="Ozersky P."/>
            <person name="Armstrong J.R."/>
            <person name="Fulton R.S."/>
            <person name="Latreille J.P."/>
            <person name="Spieth J."/>
            <person name="Hooton T.M."/>
            <person name="Mardis E.R."/>
            <person name="Hultgren S.J."/>
            <person name="Gordon J.I."/>
        </authorList>
    </citation>
    <scope>NUCLEOTIDE SEQUENCE [LARGE SCALE GENOMIC DNA]</scope>
    <source>
        <strain>UTI89 / UPEC</strain>
    </source>
</reference>
<accession>Q1R3Q5</accession>
<comment type="subcellular location">
    <subcellularLocation>
        <location evidence="1">Cell inner membrane</location>
        <topology evidence="1">Multi-pass membrane protein</topology>
    </subcellularLocation>
</comment>
<comment type="similarity">
    <text evidence="1">Belongs to the PsiE family.</text>
</comment>
<protein>
    <recommendedName>
        <fullName evidence="1">Protein PsiE</fullName>
    </recommendedName>
</protein>
<feature type="chain" id="PRO_1000064314" description="Protein PsiE">
    <location>
        <begin position="1"/>
        <end position="136"/>
    </location>
</feature>
<feature type="transmembrane region" description="Helical" evidence="1">
    <location>
        <begin position="15"/>
        <end position="35"/>
    </location>
</feature>
<feature type="transmembrane region" description="Helical" evidence="1">
    <location>
        <begin position="55"/>
        <end position="75"/>
    </location>
</feature>
<feature type="transmembrane region" description="Helical" evidence="1">
    <location>
        <begin position="82"/>
        <end position="102"/>
    </location>
</feature>
<feature type="transmembrane region" description="Helical" evidence="1">
    <location>
        <begin position="108"/>
        <end position="128"/>
    </location>
</feature>
<organism>
    <name type="scientific">Escherichia coli (strain UTI89 / UPEC)</name>
    <dbReference type="NCBI Taxonomy" id="364106"/>
    <lineage>
        <taxon>Bacteria</taxon>
        <taxon>Pseudomonadati</taxon>
        <taxon>Pseudomonadota</taxon>
        <taxon>Gammaproteobacteria</taxon>
        <taxon>Enterobacterales</taxon>
        <taxon>Enterobacteriaceae</taxon>
        <taxon>Escherichia</taxon>
    </lineage>
</organism>
<name>PSIE_ECOUT</name>
<dbReference type="EMBL" id="CP000243">
    <property type="protein sequence ID" value="ABE10009.1"/>
    <property type="molecule type" value="Genomic_DNA"/>
</dbReference>
<dbReference type="RefSeq" id="WP_000202899.1">
    <property type="nucleotide sequence ID" value="NZ_CP064825.1"/>
</dbReference>
<dbReference type="SMR" id="Q1R3Q5"/>
<dbReference type="KEGG" id="eci:UTI89_C4601"/>
<dbReference type="HOGENOM" id="CLU_127561_0_1_6"/>
<dbReference type="Proteomes" id="UP000001952">
    <property type="component" value="Chromosome"/>
</dbReference>
<dbReference type="GO" id="GO:0005886">
    <property type="term" value="C:plasma membrane"/>
    <property type="evidence" value="ECO:0007669"/>
    <property type="project" value="UniProtKB-SubCell"/>
</dbReference>
<dbReference type="GO" id="GO:0016036">
    <property type="term" value="P:cellular response to phosphate starvation"/>
    <property type="evidence" value="ECO:0007669"/>
    <property type="project" value="InterPro"/>
</dbReference>
<dbReference type="HAMAP" id="MF_01048">
    <property type="entry name" value="PsiE"/>
    <property type="match status" value="1"/>
</dbReference>
<dbReference type="InterPro" id="IPR009315">
    <property type="entry name" value="P_starv_induced_PsiE"/>
</dbReference>
<dbReference type="InterPro" id="IPR020948">
    <property type="entry name" value="P_starv_induced_PsiE-like"/>
</dbReference>
<dbReference type="NCBIfam" id="NF002764">
    <property type="entry name" value="PRK02833.1-2"/>
    <property type="match status" value="1"/>
</dbReference>
<dbReference type="NCBIfam" id="NF002765">
    <property type="entry name" value="PRK02833.1-3"/>
    <property type="match status" value="1"/>
</dbReference>
<dbReference type="NCBIfam" id="NF002767">
    <property type="entry name" value="PRK02833.1-5"/>
    <property type="match status" value="1"/>
</dbReference>
<dbReference type="PANTHER" id="PTHR37819">
    <property type="entry name" value="PROTEIN PSIE"/>
    <property type="match status" value="1"/>
</dbReference>
<dbReference type="PANTHER" id="PTHR37819:SF1">
    <property type="entry name" value="PROTEIN PSIE"/>
    <property type="match status" value="1"/>
</dbReference>
<dbReference type="Pfam" id="PF06146">
    <property type="entry name" value="PsiE"/>
    <property type="match status" value="1"/>
</dbReference>
<dbReference type="PIRSF" id="PIRSF029598">
    <property type="entry name" value="PsiE"/>
    <property type="match status" value="1"/>
</dbReference>
<proteinExistence type="inferred from homology"/>
<evidence type="ECO:0000255" key="1">
    <source>
        <dbReference type="HAMAP-Rule" id="MF_01048"/>
    </source>
</evidence>
<gene>
    <name evidence="1" type="primary">psiE</name>
    <name type="ordered locus">UTI89_C4601</name>
</gene>
<keyword id="KW-0997">Cell inner membrane</keyword>
<keyword id="KW-1003">Cell membrane</keyword>
<keyword id="KW-0472">Membrane</keyword>
<keyword id="KW-0812">Transmembrane</keyword>
<keyword id="KW-1133">Transmembrane helix</keyword>
<sequence length="136" mass="15567">MTSLSRPRVEFISTILQTVLNLGLLCLGLILVVFLGKETVHLADVLFAPEQASKYELVEGLVVYFLYFEFIALIVKYFQSGFHFPLRYFVYIGITAIVRLIIVDHKSPLDVLIYSAAILLLVITLWLCNSKRLKRE</sequence>